<organism>
    <name type="scientific">Mycobacterium bovis (strain ATCC BAA-935 / AF2122/97)</name>
    <dbReference type="NCBI Taxonomy" id="233413"/>
    <lineage>
        <taxon>Bacteria</taxon>
        <taxon>Bacillati</taxon>
        <taxon>Actinomycetota</taxon>
        <taxon>Actinomycetes</taxon>
        <taxon>Mycobacteriales</taxon>
        <taxon>Mycobacteriaceae</taxon>
        <taxon>Mycobacterium</taxon>
        <taxon>Mycobacterium tuberculosis complex</taxon>
    </lineage>
</organism>
<gene>
    <name type="ordered locus">BQ2027_MB0980</name>
</gene>
<comment type="subcellular location">
    <subcellularLocation>
        <location evidence="3">Cell membrane</location>
        <topology evidence="3">Multi-pass membrane protein</topology>
    </subcellularLocation>
</comment>
<feature type="chain" id="PRO_0000103752" description="Uncharacterized protein Mb0980">
    <location>
        <begin position="1"/>
        <end position="455"/>
    </location>
</feature>
<feature type="transmembrane region" description="Helical" evidence="1">
    <location>
        <begin position="26"/>
        <end position="46"/>
    </location>
</feature>
<feature type="transmembrane region" description="Helical" evidence="1">
    <location>
        <begin position="53"/>
        <end position="73"/>
    </location>
</feature>
<feature type="transmembrane region" description="Helical" evidence="1">
    <location>
        <begin position="77"/>
        <end position="97"/>
    </location>
</feature>
<feature type="transmembrane region" description="Helical" evidence="1">
    <location>
        <begin position="111"/>
        <end position="131"/>
    </location>
</feature>
<feature type="transmembrane region" description="Helical" evidence="1">
    <location>
        <begin position="146"/>
        <end position="166"/>
    </location>
</feature>
<feature type="transmembrane region" description="Helical" evidence="1">
    <location>
        <begin position="191"/>
        <end position="211"/>
    </location>
</feature>
<feature type="transmembrane region" description="Helical" evidence="1">
    <location>
        <begin position="232"/>
        <end position="252"/>
    </location>
</feature>
<feature type="transmembrane region" description="Helical" evidence="1">
    <location>
        <begin position="256"/>
        <end position="276"/>
    </location>
</feature>
<feature type="transmembrane region" description="Helical" evidence="1">
    <location>
        <begin position="278"/>
        <end position="298"/>
    </location>
</feature>
<feature type="transmembrane region" description="Helical" evidence="1">
    <location>
        <begin position="323"/>
        <end position="343"/>
    </location>
</feature>
<feature type="transmembrane region" description="Helical" evidence="1">
    <location>
        <begin position="357"/>
        <end position="377"/>
    </location>
</feature>
<feature type="region of interest" description="Disordered" evidence="2">
    <location>
        <begin position="384"/>
        <end position="455"/>
    </location>
</feature>
<evidence type="ECO:0000255" key="1"/>
<evidence type="ECO:0000256" key="2">
    <source>
        <dbReference type="SAM" id="MobiDB-lite"/>
    </source>
</evidence>
<evidence type="ECO:0000305" key="3"/>
<accession>P64772</accession>
<accession>A0A1R3XWW0</accession>
<accession>P71555</accession>
<accession>X2BGM3</accession>
<reference key="1">
    <citation type="journal article" date="2003" name="Proc. Natl. Acad. Sci. U.S.A.">
        <title>The complete genome sequence of Mycobacterium bovis.</title>
        <authorList>
            <person name="Garnier T."/>
            <person name="Eiglmeier K."/>
            <person name="Camus J.-C."/>
            <person name="Medina N."/>
            <person name="Mansoor H."/>
            <person name="Pryor M."/>
            <person name="Duthoy S."/>
            <person name="Grondin S."/>
            <person name="Lacroix C."/>
            <person name="Monsempe C."/>
            <person name="Simon S."/>
            <person name="Harris B."/>
            <person name="Atkin R."/>
            <person name="Doggett J."/>
            <person name="Mayes R."/>
            <person name="Keating L."/>
            <person name="Wheeler P.R."/>
            <person name="Parkhill J."/>
            <person name="Barrell B.G."/>
            <person name="Cole S.T."/>
            <person name="Gordon S.V."/>
            <person name="Hewinson R.G."/>
        </authorList>
    </citation>
    <scope>NUCLEOTIDE SEQUENCE [LARGE SCALE GENOMIC DNA]</scope>
    <source>
        <strain>ATCC BAA-935 / AF2122/97</strain>
    </source>
</reference>
<reference key="2">
    <citation type="journal article" date="2017" name="Genome Announc.">
        <title>Updated reference genome sequence and annotation of Mycobacterium bovis AF2122/97.</title>
        <authorList>
            <person name="Malone K.M."/>
            <person name="Farrell D."/>
            <person name="Stuber T.P."/>
            <person name="Schubert O.T."/>
            <person name="Aebersold R."/>
            <person name="Robbe-Austerman S."/>
            <person name="Gordon S.V."/>
        </authorList>
    </citation>
    <scope>NUCLEOTIDE SEQUENCE [LARGE SCALE GENOMIC DNA]</scope>
    <scope>GENOME REANNOTATION</scope>
    <source>
        <strain>ATCC BAA-935 / AF2122/97</strain>
    </source>
</reference>
<proteinExistence type="predicted"/>
<name>Y980_MYCBO</name>
<keyword id="KW-1003">Cell membrane</keyword>
<keyword id="KW-0472">Membrane</keyword>
<keyword id="KW-1185">Reference proteome</keyword>
<keyword id="KW-0812">Transmembrane</keyword>
<keyword id="KW-1133">Transmembrane helix</keyword>
<dbReference type="EMBL" id="LT708304">
    <property type="protein sequence ID" value="SIT99578.1"/>
    <property type="molecule type" value="Genomic_DNA"/>
</dbReference>
<dbReference type="RefSeq" id="NP_854637.1">
    <property type="nucleotide sequence ID" value="NC_002945.3"/>
</dbReference>
<dbReference type="RefSeq" id="WP_003901049.1">
    <property type="nucleotide sequence ID" value="NC_002945.4"/>
</dbReference>
<dbReference type="KEGG" id="mbo:BQ2027_MB0980"/>
<dbReference type="PATRIC" id="fig|233413.5.peg.1067"/>
<dbReference type="Proteomes" id="UP000001419">
    <property type="component" value="Chromosome"/>
</dbReference>
<dbReference type="GO" id="GO:0005886">
    <property type="term" value="C:plasma membrane"/>
    <property type="evidence" value="ECO:0007669"/>
    <property type="project" value="UniProtKB-SubCell"/>
</dbReference>
<dbReference type="InterPro" id="IPR045931">
    <property type="entry name" value="DUF6350"/>
</dbReference>
<dbReference type="Pfam" id="PF19877">
    <property type="entry name" value="DUF6350"/>
    <property type="match status" value="1"/>
</dbReference>
<protein>
    <recommendedName>
        <fullName>Uncharacterized protein Mb0980</fullName>
    </recommendedName>
</protein>
<sequence length="455" mass="46089">MNRVSASADDRAAGARPARDLVRVAFGPGVVALGIIAAVTLLQLLIANSDMTGAWGAIASMWLGVHLVPISIGGRALGVMPLLPVLLMVWATARSTARATSPQSSGLVVRWVVASALGGPLLMAAIALAVIHDASSVVTELQTPSALRAFTSVLVVHSVGAATGVWSRVGRRALAATALPDWLHDSMRAAAAGVLALLGLSGVVTAGSLVVHWATMQELYGITDSIFGQFSLTVLSVLYAPNVIVGTSAIAVGSSAHIGFATFSSFAVLGGDIPALPILAAAPTPPLGPAWVALLIVGASSGVAVGQQCARRALPFVAAMAKLLVAAVAGALVMAVLGYGGGGRLGNFGDVGVDEGALVLGVLFWFTFVGWVTVVIAGGISRRPKRLRPAPPVELDADESSPPVDMFDGAASEQPPASVAEDVPPSHDDIANGLKAPTADDEALPLSDEPPPRAD</sequence>